<keyword id="KW-0997">Cell inner membrane</keyword>
<keyword id="KW-1003">Cell membrane</keyword>
<keyword id="KW-0328">Glycosyltransferase</keyword>
<keyword id="KW-0460">Magnesium</keyword>
<keyword id="KW-0472">Membrane</keyword>
<keyword id="KW-0479">Metal-binding</keyword>
<keyword id="KW-0660">Purine salvage</keyword>
<keyword id="KW-0808">Transferase</keyword>
<dbReference type="EC" id="2.4.2.-" evidence="1"/>
<dbReference type="EC" id="2.4.2.22" evidence="1"/>
<dbReference type="EMBL" id="CP001657">
    <property type="protein sequence ID" value="ACT14305.1"/>
    <property type="molecule type" value="Genomic_DNA"/>
</dbReference>
<dbReference type="RefSeq" id="WP_010282559.1">
    <property type="nucleotide sequence ID" value="NC_012917.1"/>
</dbReference>
<dbReference type="SMR" id="C6DCY0"/>
<dbReference type="STRING" id="561230.PC1_3289"/>
<dbReference type="GeneID" id="67792914"/>
<dbReference type="KEGG" id="pct:PC1_3289"/>
<dbReference type="eggNOG" id="COG2236">
    <property type="taxonomic scope" value="Bacteria"/>
</dbReference>
<dbReference type="HOGENOM" id="CLU_080904_3_0_6"/>
<dbReference type="OrthoDB" id="9789690at2"/>
<dbReference type="UniPathway" id="UPA00602">
    <property type="reaction ID" value="UER00658"/>
</dbReference>
<dbReference type="UniPathway" id="UPA00909">
    <property type="reaction ID" value="UER00887"/>
</dbReference>
<dbReference type="Proteomes" id="UP000002736">
    <property type="component" value="Chromosome"/>
</dbReference>
<dbReference type="GO" id="GO:0005829">
    <property type="term" value="C:cytosol"/>
    <property type="evidence" value="ECO:0007669"/>
    <property type="project" value="TreeGrafter"/>
</dbReference>
<dbReference type="GO" id="GO:0005886">
    <property type="term" value="C:plasma membrane"/>
    <property type="evidence" value="ECO:0007669"/>
    <property type="project" value="UniProtKB-SubCell"/>
</dbReference>
<dbReference type="GO" id="GO:0052657">
    <property type="term" value="F:guanine phosphoribosyltransferase activity"/>
    <property type="evidence" value="ECO:0007669"/>
    <property type="project" value="RHEA"/>
</dbReference>
<dbReference type="GO" id="GO:0004422">
    <property type="term" value="F:hypoxanthine phosphoribosyltransferase activity"/>
    <property type="evidence" value="ECO:0007669"/>
    <property type="project" value="TreeGrafter"/>
</dbReference>
<dbReference type="GO" id="GO:0000287">
    <property type="term" value="F:magnesium ion binding"/>
    <property type="evidence" value="ECO:0007669"/>
    <property type="project" value="UniProtKB-UniRule"/>
</dbReference>
<dbReference type="GO" id="GO:0000310">
    <property type="term" value="F:xanthine phosphoribosyltransferase activity"/>
    <property type="evidence" value="ECO:0007669"/>
    <property type="project" value="UniProtKB-UniRule"/>
</dbReference>
<dbReference type="GO" id="GO:0032263">
    <property type="term" value="P:GMP salvage"/>
    <property type="evidence" value="ECO:0007669"/>
    <property type="project" value="UniProtKB-UniRule"/>
</dbReference>
<dbReference type="GO" id="GO:0032264">
    <property type="term" value="P:IMP salvage"/>
    <property type="evidence" value="ECO:0007669"/>
    <property type="project" value="TreeGrafter"/>
</dbReference>
<dbReference type="GO" id="GO:0006166">
    <property type="term" value="P:purine ribonucleoside salvage"/>
    <property type="evidence" value="ECO:0007669"/>
    <property type="project" value="UniProtKB-KW"/>
</dbReference>
<dbReference type="GO" id="GO:0032265">
    <property type="term" value="P:XMP salvage"/>
    <property type="evidence" value="ECO:0007669"/>
    <property type="project" value="UniProtKB-UniRule"/>
</dbReference>
<dbReference type="CDD" id="cd06223">
    <property type="entry name" value="PRTases_typeI"/>
    <property type="match status" value="1"/>
</dbReference>
<dbReference type="FunFam" id="3.40.50.2020:FF:000009">
    <property type="entry name" value="Xanthine phosphoribosyltransferase"/>
    <property type="match status" value="1"/>
</dbReference>
<dbReference type="Gene3D" id="3.40.50.2020">
    <property type="match status" value="1"/>
</dbReference>
<dbReference type="HAMAP" id="MF_01903">
    <property type="entry name" value="XGPRT"/>
    <property type="match status" value="1"/>
</dbReference>
<dbReference type="InterPro" id="IPR000836">
    <property type="entry name" value="PRibTrfase_dom"/>
</dbReference>
<dbReference type="InterPro" id="IPR029057">
    <property type="entry name" value="PRTase-like"/>
</dbReference>
<dbReference type="InterPro" id="IPR023747">
    <property type="entry name" value="Xanthine_Guanine_PRibTrfase"/>
</dbReference>
<dbReference type="NCBIfam" id="NF006613">
    <property type="entry name" value="PRK09177.1"/>
    <property type="match status" value="1"/>
</dbReference>
<dbReference type="PANTHER" id="PTHR39563">
    <property type="entry name" value="XANTHINE PHOSPHORIBOSYLTRANSFERASE"/>
    <property type="match status" value="1"/>
</dbReference>
<dbReference type="PANTHER" id="PTHR39563:SF1">
    <property type="entry name" value="XANTHINE-GUANINE PHOSPHORIBOSYLTRANSFERASE"/>
    <property type="match status" value="1"/>
</dbReference>
<dbReference type="Pfam" id="PF00156">
    <property type="entry name" value="Pribosyltran"/>
    <property type="match status" value="1"/>
</dbReference>
<dbReference type="SUPFAM" id="SSF53271">
    <property type="entry name" value="PRTase-like"/>
    <property type="match status" value="1"/>
</dbReference>
<dbReference type="PROSITE" id="PS00103">
    <property type="entry name" value="PUR_PYR_PR_TRANSFER"/>
    <property type="match status" value="1"/>
</dbReference>
<comment type="function">
    <text evidence="1">Purine salvage pathway enzyme that catalyzes the transfer of the ribosyl-5-phosphate group from 5-phospho-alpha-D-ribose 1-diphosphate (PRPP) to the N9 position of the 6-oxopurines guanine and xanthine to form the corresponding ribonucleotides GMP (guanosine 5'-monophosphate) and XMP (xanthosine 5'-monophosphate), with the release of PPi. To a lesser extent, also acts on hypoxanthine.</text>
</comment>
<comment type="catalytic activity">
    <reaction evidence="1">
        <text>GMP + diphosphate = guanine + 5-phospho-alpha-D-ribose 1-diphosphate</text>
        <dbReference type="Rhea" id="RHEA:25424"/>
        <dbReference type="ChEBI" id="CHEBI:16235"/>
        <dbReference type="ChEBI" id="CHEBI:33019"/>
        <dbReference type="ChEBI" id="CHEBI:58017"/>
        <dbReference type="ChEBI" id="CHEBI:58115"/>
    </reaction>
    <physiologicalReaction direction="right-to-left" evidence="1">
        <dbReference type="Rhea" id="RHEA:25426"/>
    </physiologicalReaction>
</comment>
<comment type="catalytic activity">
    <reaction evidence="1">
        <text>XMP + diphosphate = xanthine + 5-phospho-alpha-D-ribose 1-diphosphate</text>
        <dbReference type="Rhea" id="RHEA:10800"/>
        <dbReference type="ChEBI" id="CHEBI:17712"/>
        <dbReference type="ChEBI" id="CHEBI:33019"/>
        <dbReference type="ChEBI" id="CHEBI:57464"/>
        <dbReference type="ChEBI" id="CHEBI:58017"/>
        <dbReference type="EC" id="2.4.2.22"/>
    </reaction>
    <physiologicalReaction direction="right-to-left" evidence="1">
        <dbReference type="Rhea" id="RHEA:10802"/>
    </physiologicalReaction>
</comment>
<comment type="catalytic activity">
    <reaction evidence="1">
        <text>IMP + diphosphate = hypoxanthine + 5-phospho-alpha-D-ribose 1-diphosphate</text>
        <dbReference type="Rhea" id="RHEA:17973"/>
        <dbReference type="ChEBI" id="CHEBI:17368"/>
        <dbReference type="ChEBI" id="CHEBI:33019"/>
        <dbReference type="ChEBI" id="CHEBI:58017"/>
        <dbReference type="ChEBI" id="CHEBI:58053"/>
    </reaction>
    <physiologicalReaction direction="right-to-left" evidence="1">
        <dbReference type="Rhea" id="RHEA:17975"/>
    </physiologicalReaction>
</comment>
<comment type="cofactor">
    <cofactor evidence="1">
        <name>Mg(2+)</name>
        <dbReference type="ChEBI" id="CHEBI:18420"/>
    </cofactor>
</comment>
<comment type="pathway">
    <text evidence="1">Purine metabolism; GMP biosynthesis via salvage pathway; GMP from guanine: step 1/1.</text>
</comment>
<comment type="pathway">
    <text evidence="1">Purine metabolism; XMP biosynthesis via salvage pathway; XMP from xanthine: step 1/1.</text>
</comment>
<comment type="subunit">
    <text evidence="1">Homotetramer.</text>
</comment>
<comment type="subcellular location">
    <subcellularLocation>
        <location evidence="1">Cell inner membrane</location>
        <topology evidence="1">Peripheral membrane protein</topology>
    </subcellularLocation>
</comment>
<comment type="similarity">
    <text evidence="1">Belongs to the purine/pyrimidine phosphoribosyltransferase family. XGPT subfamily.</text>
</comment>
<reference key="1">
    <citation type="submission" date="2009-07" db="EMBL/GenBank/DDBJ databases">
        <title>Complete sequence of Pectobacterium carotovorum subsp. carotovorum PC1.</title>
        <authorList>
            <consortium name="US DOE Joint Genome Institute"/>
            <person name="Lucas S."/>
            <person name="Copeland A."/>
            <person name="Lapidus A."/>
            <person name="Glavina del Rio T."/>
            <person name="Tice H."/>
            <person name="Bruce D."/>
            <person name="Goodwin L."/>
            <person name="Pitluck S."/>
            <person name="Munk A.C."/>
            <person name="Brettin T."/>
            <person name="Detter J.C."/>
            <person name="Han C."/>
            <person name="Tapia R."/>
            <person name="Larimer F."/>
            <person name="Land M."/>
            <person name="Hauser L."/>
            <person name="Kyrpides N."/>
            <person name="Mikhailova N."/>
            <person name="Balakrishnan V."/>
            <person name="Glasner J."/>
            <person name="Perna N.T."/>
        </authorList>
    </citation>
    <scope>NUCLEOTIDE SEQUENCE [LARGE SCALE GENOMIC DNA]</scope>
    <source>
        <strain>PC1</strain>
    </source>
</reference>
<feature type="chain" id="PRO_1000216170" description="Xanthine-guanine phosphoribosyltransferase">
    <location>
        <begin position="1"/>
        <end position="152"/>
    </location>
</feature>
<feature type="binding site" evidence="1">
    <location>
        <begin position="37"/>
        <end position="38"/>
    </location>
    <ligand>
        <name>5-phospho-alpha-D-ribose 1-diphosphate</name>
        <dbReference type="ChEBI" id="CHEBI:58017"/>
    </ligand>
</feature>
<feature type="binding site" evidence="1">
    <location>
        <position position="69"/>
    </location>
    <ligand>
        <name>5-phospho-alpha-D-ribose 1-diphosphate</name>
        <dbReference type="ChEBI" id="CHEBI:58017"/>
    </ligand>
</feature>
<feature type="binding site" evidence="1">
    <location>
        <position position="69"/>
    </location>
    <ligand>
        <name>GMP</name>
        <dbReference type="ChEBI" id="CHEBI:58115"/>
    </ligand>
</feature>
<feature type="binding site" evidence="1">
    <location>
        <begin position="88"/>
        <end position="96"/>
    </location>
    <ligand>
        <name>5-phospho-alpha-D-ribose 1-diphosphate</name>
        <dbReference type="ChEBI" id="CHEBI:58017"/>
    </ligand>
</feature>
<feature type="binding site" evidence="1">
    <location>
        <position position="89"/>
    </location>
    <ligand>
        <name>Mg(2+)</name>
        <dbReference type="ChEBI" id="CHEBI:18420"/>
    </ligand>
</feature>
<feature type="binding site" evidence="1">
    <location>
        <begin position="92"/>
        <end position="96"/>
    </location>
    <ligand>
        <name>GMP</name>
        <dbReference type="ChEBI" id="CHEBI:58115"/>
    </ligand>
</feature>
<feature type="binding site" evidence="1">
    <location>
        <position position="92"/>
    </location>
    <ligand>
        <name>guanine</name>
        <dbReference type="ChEBI" id="CHEBI:16235"/>
    </ligand>
</feature>
<feature type="binding site" evidence="1">
    <location>
        <position position="92"/>
    </location>
    <ligand>
        <name>xanthine</name>
        <dbReference type="ChEBI" id="CHEBI:17712"/>
    </ligand>
</feature>
<feature type="binding site" evidence="1">
    <location>
        <begin position="134"/>
        <end position="135"/>
    </location>
    <ligand>
        <name>GMP</name>
        <dbReference type="ChEBI" id="CHEBI:58115"/>
    </ligand>
</feature>
<feature type="binding site" evidence="1">
    <location>
        <position position="135"/>
    </location>
    <ligand>
        <name>guanine</name>
        <dbReference type="ChEBI" id="CHEBI:16235"/>
    </ligand>
</feature>
<feature type="binding site" evidence="1">
    <location>
        <position position="135"/>
    </location>
    <ligand>
        <name>xanthine</name>
        <dbReference type="ChEBI" id="CHEBI:17712"/>
    </ligand>
</feature>
<proteinExistence type="inferred from homology"/>
<accession>C6DCY0</accession>
<gene>
    <name evidence="1" type="primary">gpt</name>
    <name type="ordered locus">PC1_3289</name>
</gene>
<name>XGPT_PECCP</name>
<sequence>MSEKYVVTWDMLQIHARKLAQRLLPADQWKGIIAVSRGGLVPSALLARELGIRHVDTVCISSYDHDNQREMKVLKRAEGDGEGFIVIDDLVDTGGTAKAIRDMYPKAHFVTIFAKPAGKPLVDDYVIDIPQDTWIEQPWDMGVVFVPPLSGR</sequence>
<evidence type="ECO:0000255" key="1">
    <source>
        <dbReference type="HAMAP-Rule" id="MF_01903"/>
    </source>
</evidence>
<organism>
    <name type="scientific">Pectobacterium carotovorum subsp. carotovorum (strain PC1)</name>
    <dbReference type="NCBI Taxonomy" id="561230"/>
    <lineage>
        <taxon>Bacteria</taxon>
        <taxon>Pseudomonadati</taxon>
        <taxon>Pseudomonadota</taxon>
        <taxon>Gammaproteobacteria</taxon>
        <taxon>Enterobacterales</taxon>
        <taxon>Pectobacteriaceae</taxon>
        <taxon>Pectobacterium</taxon>
    </lineage>
</organism>
<protein>
    <recommendedName>
        <fullName evidence="1">Xanthine-guanine phosphoribosyltransferase</fullName>
        <shortName evidence="1">XGPRT</shortName>
        <ecNumber evidence="1">2.4.2.-</ecNumber>
        <ecNumber evidence="1">2.4.2.22</ecNumber>
    </recommendedName>
    <alternativeName>
        <fullName evidence="1">Xanthine phosphoribosyltransferase</fullName>
    </alternativeName>
</protein>